<feature type="chain" id="PRO_0000135624" description="Pyridoxal 5'-phosphate synthase subunit PdxT">
    <location>
        <begin position="1"/>
        <end position="190"/>
    </location>
</feature>
<feature type="active site" description="Nucleophile" evidence="1">
    <location>
        <position position="78"/>
    </location>
</feature>
<feature type="active site" description="Charge relay system" evidence="1">
    <location>
        <position position="169"/>
    </location>
</feature>
<feature type="active site" description="Charge relay system" evidence="1">
    <location>
        <position position="171"/>
    </location>
</feature>
<feature type="binding site" evidence="1">
    <location>
        <begin position="46"/>
        <end position="48"/>
    </location>
    <ligand>
        <name>L-glutamine</name>
        <dbReference type="ChEBI" id="CHEBI:58359"/>
    </ligand>
</feature>
<feature type="binding site" evidence="1">
    <location>
        <position position="105"/>
    </location>
    <ligand>
        <name>L-glutamine</name>
        <dbReference type="ChEBI" id="CHEBI:58359"/>
    </ligand>
</feature>
<feature type="binding site" evidence="1">
    <location>
        <begin position="133"/>
        <end position="134"/>
    </location>
    <ligand>
        <name>L-glutamine</name>
        <dbReference type="ChEBI" id="CHEBI:58359"/>
    </ligand>
</feature>
<protein>
    <recommendedName>
        <fullName evidence="1">Pyridoxal 5'-phosphate synthase subunit PdxT</fullName>
        <ecNumber evidence="1">4.3.3.6</ecNumber>
    </recommendedName>
    <alternativeName>
        <fullName evidence="1">Pdx2</fullName>
    </alternativeName>
    <alternativeName>
        <fullName evidence="1">Pyridoxal 5'-phosphate synthase glutaminase subunit</fullName>
        <ecNumber evidence="1">3.5.1.2</ecNumber>
    </alternativeName>
</protein>
<name>PDXT_NIACI</name>
<sequence>MKVGVLALQGAVAEHIRLIEAVGGEGVVVKRAEQLAELDGLIIPGGESTTIGKLMRRYGFIEAIRDFSNQGKAVFGTCAGLIVIADKIAGQEEAHLGLMDMTVQRNAFGRQRESFETDLPVKGIDRPVRAVFIRAPLIDQVGNGVDVLSEYNGQIVAARQGHLLAASFHPELTDDSSMHAYFLDMIREAR</sequence>
<dbReference type="EC" id="4.3.3.6" evidence="1"/>
<dbReference type="EC" id="3.5.1.2" evidence="1"/>
<dbReference type="EMBL" id="AB066209">
    <property type="protein sequence ID" value="BAC06853.1"/>
    <property type="molecule type" value="Genomic_DNA"/>
</dbReference>
<dbReference type="SMR" id="Q8L1A7"/>
<dbReference type="BioCyc" id="MetaCyc:MONOMER-17226"/>
<dbReference type="BRENDA" id="4.3.3.6">
    <property type="organism ID" value="649"/>
</dbReference>
<dbReference type="UniPathway" id="UPA00245"/>
<dbReference type="GO" id="GO:0005829">
    <property type="term" value="C:cytosol"/>
    <property type="evidence" value="ECO:0007669"/>
    <property type="project" value="TreeGrafter"/>
</dbReference>
<dbReference type="GO" id="GO:1903600">
    <property type="term" value="C:glutaminase complex"/>
    <property type="evidence" value="ECO:0007669"/>
    <property type="project" value="TreeGrafter"/>
</dbReference>
<dbReference type="GO" id="GO:0004359">
    <property type="term" value="F:glutaminase activity"/>
    <property type="evidence" value="ECO:0007669"/>
    <property type="project" value="UniProtKB-UniRule"/>
</dbReference>
<dbReference type="GO" id="GO:0036381">
    <property type="term" value="F:pyridoxal 5'-phosphate synthase (glutamine hydrolysing) activity"/>
    <property type="evidence" value="ECO:0007669"/>
    <property type="project" value="UniProtKB-UniRule"/>
</dbReference>
<dbReference type="GO" id="GO:0006543">
    <property type="term" value="P:glutamine catabolic process"/>
    <property type="evidence" value="ECO:0007669"/>
    <property type="project" value="UniProtKB-UniRule"/>
</dbReference>
<dbReference type="GO" id="GO:0042823">
    <property type="term" value="P:pyridoxal phosphate biosynthetic process"/>
    <property type="evidence" value="ECO:0007669"/>
    <property type="project" value="UniProtKB-UniRule"/>
</dbReference>
<dbReference type="GO" id="GO:0008614">
    <property type="term" value="P:pyridoxine metabolic process"/>
    <property type="evidence" value="ECO:0007669"/>
    <property type="project" value="TreeGrafter"/>
</dbReference>
<dbReference type="CDD" id="cd01749">
    <property type="entry name" value="GATase1_PB"/>
    <property type="match status" value="1"/>
</dbReference>
<dbReference type="FunFam" id="3.40.50.880:FF:000010">
    <property type="entry name" value="uncharacterized protein LOC100176842 isoform X2"/>
    <property type="match status" value="1"/>
</dbReference>
<dbReference type="Gene3D" id="3.40.50.880">
    <property type="match status" value="1"/>
</dbReference>
<dbReference type="HAMAP" id="MF_01615">
    <property type="entry name" value="PdxT"/>
    <property type="match status" value="1"/>
</dbReference>
<dbReference type="InterPro" id="IPR029062">
    <property type="entry name" value="Class_I_gatase-like"/>
</dbReference>
<dbReference type="InterPro" id="IPR002161">
    <property type="entry name" value="PdxT/SNO"/>
</dbReference>
<dbReference type="InterPro" id="IPR021196">
    <property type="entry name" value="PdxT/SNO_CS"/>
</dbReference>
<dbReference type="NCBIfam" id="TIGR03800">
    <property type="entry name" value="PLP_synth_Pdx2"/>
    <property type="match status" value="1"/>
</dbReference>
<dbReference type="PANTHER" id="PTHR31559">
    <property type="entry name" value="PYRIDOXAL 5'-PHOSPHATE SYNTHASE SUBUNIT SNO"/>
    <property type="match status" value="1"/>
</dbReference>
<dbReference type="PANTHER" id="PTHR31559:SF0">
    <property type="entry name" value="PYRIDOXAL 5'-PHOSPHATE SYNTHASE SUBUNIT SNO1-RELATED"/>
    <property type="match status" value="1"/>
</dbReference>
<dbReference type="Pfam" id="PF01174">
    <property type="entry name" value="SNO"/>
    <property type="match status" value="1"/>
</dbReference>
<dbReference type="PIRSF" id="PIRSF005639">
    <property type="entry name" value="Glut_amidoT_SNO"/>
    <property type="match status" value="1"/>
</dbReference>
<dbReference type="SUPFAM" id="SSF52317">
    <property type="entry name" value="Class I glutamine amidotransferase-like"/>
    <property type="match status" value="1"/>
</dbReference>
<dbReference type="PROSITE" id="PS01236">
    <property type="entry name" value="PDXT_SNO_1"/>
    <property type="match status" value="1"/>
</dbReference>
<dbReference type="PROSITE" id="PS51130">
    <property type="entry name" value="PDXT_SNO_2"/>
    <property type="match status" value="1"/>
</dbReference>
<evidence type="ECO:0000255" key="1">
    <source>
        <dbReference type="HAMAP-Rule" id="MF_01615"/>
    </source>
</evidence>
<evidence type="ECO:0000305" key="2">
    <source>
    </source>
</evidence>
<accession>Q8L1A7</accession>
<comment type="function">
    <text evidence="1">Catalyzes the hydrolysis of glutamine to glutamate and ammonia as part of the biosynthesis of pyridoxal 5'-phosphate. The resulting ammonia molecule is channeled to the active site of PdxS.</text>
</comment>
<comment type="catalytic activity">
    <reaction evidence="1">
        <text>aldehydo-D-ribose 5-phosphate + D-glyceraldehyde 3-phosphate + L-glutamine = pyridoxal 5'-phosphate + L-glutamate + phosphate + 3 H2O + H(+)</text>
        <dbReference type="Rhea" id="RHEA:31507"/>
        <dbReference type="ChEBI" id="CHEBI:15377"/>
        <dbReference type="ChEBI" id="CHEBI:15378"/>
        <dbReference type="ChEBI" id="CHEBI:29985"/>
        <dbReference type="ChEBI" id="CHEBI:43474"/>
        <dbReference type="ChEBI" id="CHEBI:58273"/>
        <dbReference type="ChEBI" id="CHEBI:58359"/>
        <dbReference type="ChEBI" id="CHEBI:59776"/>
        <dbReference type="ChEBI" id="CHEBI:597326"/>
        <dbReference type="EC" id="4.3.3.6"/>
    </reaction>
</comment>
<comment type="catalytic activity">
    <reaction evidence="1">
        <text>L-glutamine + H2O = L-glutamate + NH4(+)</text>
        <dbReference type="Rhea" id="RHEA:15889"/>
        <dbReference type="ChEBI" id="CHEBI:15377"/>
        <dbReference type="ChEBI" id="CHEBI:28938"/>
        <dbReference type="ChEBI" id="CHEBI:29985"/>
        <dbReference type="ChEBI" id="CHEBI:58359"/>
        <dbReference type="EC" id="3.5.1.2"/>
    </reaction>
</comment>
<comment type="pathway">
    <text evidence="1">Cofactor biosynthesis; pyridoxal 5'-phosphate biosynthesis.</text>
</comment>
<comment type="subunit">
    <text evidence="1">In the presence of PdxS, forms a dodecamer of heterodimers. Only shows activity in the heterodimer.</text>
</comment>
<comment type="similarity">
    <text evidence="1">Belongs to the glutaminase PdxT/SNO family.</text>
</comment>
<comment type="caution">
    <text evidence="2">Was originally believed to be a subunit of the 2-deoxy-scyllo-inosose synthase.</text>
</comment>
<proteinExistence type="evidence at protein level"/>
<gene>
    <name evidence="1" type="primary">pdxT</name>
    <name type="synonym">btrC2</name>
</gene>
<keyword id="KW-0903">Direct protein sequencing</keyword>
<keyword id="KW-0315">Glutamine amidotransferase</keyword>
<keyword id="KW-0378">Hydrolase</keyword>
<keyword id="KW-0456">Lyase</keyword>
<keyword id="KW-0663">Pyridoxal phosphate</keyword>
<reference key="1">
    <citation type="journal article" date="2002" name="Biosci. Biotechnol. Biochem.">
        <title>Significance of the 20-kDa subunit of heterodimeric 2-deoxy-scyllo-inosose synthase for the biosynthesis of butirosin antibiotics in Bacillus circulans.</title>
        <authorList>
            <person name="Tamegai H."/>
            <person name="Nango E."/>
            <person name="Koike-Takeshita A."/>
            <person name="Kudo F."/>
            <person name="Kakinuma K."/>
        </authorList>
    </citation>
    <scope>NUCLEOTIDE SEQUENCE [GENOMIC DNA]</scope>
    <scope>PROTEIN SEQUENCE OF 1-24</scope>
</reference>
<organism>
    <name type="scientific">Niallia circulans</name>
    <name type="common">Bacillus circulans</name>
    <dbReference type="NCBI Taxonomy" id="1397"/>
    <lineage>
        <taxon>Bacteria</taxon>
        <taxon>Bacillati</taxon>
        <taxon>Bacillota</taxon>
        <taxon>Bacilli</taxon>
        <taxon>Bacillales</taxon>
        <taxon>Bacillaceae</taxon>
        <taxon>Niallia</taxon>
    </lineage>
</organism>